<sequence length="63" mass="6800">MSEKNMEKAGVVKADELDEMIDETTGGASTVNTVGIHTTYLISKGLQNCPLKPTTILPILPRK</sequence>
<dbReference type="GO" id="GO:0005576">
    <property type="term" value="C:extracellular region"/>
    <property type="evidence" value="ECO:0007669"/>
    <property type="project" value="UniProtKB-SubCell"/>
</dbReference>
<organism>
    <name type="scientific">Ruminococcus flavefaciens</name>
    <dbReference type="NCBI Taxonomy" id="1265"/>
    <lineage>
        <taxon>Bacteria</taxon>
        <taxon>Bacillati</taxon>
        <taxon>Bacillota</taxon>
        <taxon>Clostridia</taxon>
        <taxon>Eubacteriales</taxon>
        <taxon>Oscillospiraceae</taxon>
        <taxon>Ruminococcus</taxon>
    </lineage>
</organism>
<protein>
    <recommendedName>
        <fullName evidence="4">Lantipeptide Flvbeta.a</fullName>
    </recommendedName>
</protein>
<proteinExistence type="inferred from homology"/>
<reference key="1">
    <citation type="journal article" date="2016" name="Cell Chem. Biol.">
        <title>Structural characterization and bioactivity analysis of the two-component lantibiotic Flv system from a ruminant bacterium.</title>
        <authorList>
            <person name="Zhao X."/>
            <person name="van der Donk W.A."/>
        </authorList>
    </citation>
    <scope>NUCLEOTIDE SEQUENCE [GENOMIC DNA]</scope>
    <scope>EXPRESSION IN E.COLI</scope>
    <scope>DEHYDRATION AT THR-30; THR-33; THR-38; THR-39; THR-54 AND THR-55</scope>
    <scope>LANTHIONINE CROSS-LINKS</scope>
    <source>
        <strain>FD-1</strain>
    </source>
</reference>
<accession>P0DQL3</accession>
<evidence type="ECO:0000250" key="1">
    <source>
        <dbReference type="UniProtKB" id="H2A7G5"/>
    </source>
</evidence>
<evidence type="ECO:0000250" key="2">
    <source>
        <dbReference type="UniProtKB" id="P86475"/>
    </source>
</evidence>
<evidence type="ECO:0000269" key="3">
    <source>
    </source>
</evidence>
<evidence type="ECO:0000303" key="4">
    <source>
    </source>
</evidence>
<evidence type="ECO:0000305" key="5"/>
<evidence type="ECO:0000305" key="6">
    <source>
    </source>
</evidence>
<gene>
    <name evidence="4" type="primary">FlvA2.a</name>
</gene>
<comment type="function">
    <text evidence="2 3">Lanthionine-containing peptide that does probably not show antibacterial activity, since its analog [+3]Flvbeta.a does not show antibacterial activity against M.luteus (PubMed:27028884). Also does not show antibiotic activity when tested with [Del2]Flvalpha.a, an analog of Flvalpha.a, which is encoded by the same operon than Flvbeta.a (PubMed:27028884). The bactericidal activity of lantibiotics is based on depolarization of energized bacterial cytoplasmic membranes, initiated by the formation of aqueous transmembrane pores (By similarity).</text>
</comment>
<comment type="subcellular location">
    <subcellularLocation>
        <location evidence="5">Secreted</location>
    </subcellularLocation>
</comment>
<comment type="PTM">
    <text evidence="1 3">Maturation of FlvA2 peptides involves the enzymatic conversion of Thr, and Ser into dehydrated AA and the formation of thioether bonds with cysteines (PubMed:27028884). Modifications are processed by the flavecin synthetase FlvM2 (PubMed:27028884). This is followed by membrane translocation and cleavage of the modified precursor (By similarity).</text>
</comment>
<comment type="PTM">
    <text evidence="3">Contains DL-lanthionine, when coepressed in E.coli with the flavecin synthetase FlvM2.</text>
</comment>
<feature type="propeptide" id="PRO_0000450396" description="Cleaved by FlvT" evidence="6">
    <location>
        <begin position="1"/>
        <end position="28"/>
    </location>
</feature>
<feature type="peptide" id="PRO_0000450397" description="Lantipeptide Flvbeta.a" evidence="6">
    <location>
        <begin position="29"/>
        <end position="63"/>
    </location>
</feature>
<feature type="modified residue" description="2,3-didehydrobutyrine; by FlvM2" evidence="6">
    <location>
        <position position="30"/>
    </location>
</feature>
<feature type="modified residue" description="2,3-didehydrobutyrine; by FlvM2" evidence="6">
    <location>
        <position position="33"/>
    </location>
</feature>
<feature type="modified residue" description="2,3-didehydrobutyrine; by FlvM2" evidence="6">
    <location>
        <position position="38"/>
    </location>
</feature>
<feature type="modified residue" description="2,3-didehydrobutyrine; by FlvM2" evidence="6">
    <location>
        <position position="39"/>
    </location>
</feature>
<feature type="modified residue" description="2,3-didehydrobutyrine; by FlvM2" evidence="6">
    <location>
        <position position="54"/>
    </location>
</feature>
<feature type="modified residue" description="2,3-didehydrobutyrine; by FlvM2" evidence="6">
    <location>
        <position position="55"/>
    </location>
</feature>
<feature type="cross-link" description="Lanthionine (Ser-Cys); by FlvM2" evidence="6">
    <location>
        <begin position="43"/>
        <end position="49"/>
    </location>
</feature>
<name>LAN2A_RUMFL</name>
<keyword id="KW-0964">Secreted</keyword>
<keyword id="KW-0883">Thioether bond</keyword>